<name>DLTC_STAAR</name>
<proteinExistence type="inferred from homology"/>
<organism>
    <name type="scientific">Staphylococcus aureus (strain MRSA252)</name>
    <dbReference type="NCBI Taxonomy" id="282458"/>
    <lineage>
        <taxon>Bacteria</taxon>
        <taxon>Bacillati</taxon>
        <taxon>Bacillota</taxon>
        <taxon>Bacilli</taxon>
        <taxon>Bacillales</taxon>
        <taxon>Staphylococcaceae</taxon>
        <taxon>Staphylococcus</taxon>
    </lineage>
</organism>
<feature type="chain" id="PRO_0000213100" description="D-alanyl carrier protein">
    <location>
        <begin position="1"/>
        <end position="78"/>
    </location>
</feature>
<feature type="domain" description="Carrier" evidence="1">
    <location>
        <begin position="1"/>
        <end position="78"/>
    </location>
</feature>
<feature type="modified residue" description="O-(pantetheine 4'-phosphoryl)serine" evidence="1">
    <location>
        <position position="36"/>
    </location>
</feature>
<keyword id="KW-0961">Cell wall biogenesis/degradation</keyword>
<keyword id="KW-0963">Cytoplasm</keyword>
<keyword id="KW-0596">Phosphopantetheine</keyword>
<keyword id="KW-0597">Phosphoprotein</keyword>
<reference key="1">
    <citation type="journal article" date="2004" name="Proc. Natl. Acad. Sci. U.S.A.">
        <title>Complete genomes of two clinical Staphylococcus aureus strains: evidence for the rapid evolution of virulence and drug resistance.</title>
        <authorList>
            <person name="Holden M.T.G."/>
            <person name="Feil E.J."/>
            <person name="Lindsay J.A."/>
            <person name="Peacock S.J."/>
            <person name="Day N.P.J."/>
            <person name="Enright M.C."/>
            <person name="Foster T.J."/>
            <person name="Moore C.E."/>
            <person name="Hurst L."/>
            <person name="Atkin R."/>
            <person name="Barron A."/>
            <person name="Bason N."/>
            <person name="Bentley S.D."/>
            <person name="Chillingworth C."/>
            <person name="Chillingworth T."/>
            <person name="Churcher C."/>
            <person name="Clark L."/>
            <person name="Corton C."/>
            <person name="Cronin A."/>
            <person name="Doggett J."/>
            <person name="Dowd L."/>
            <person name="Feltwell T."/>
            <person name="Hance Z."/>
            <person name="Harris B."/>
            <person name="Hauser H."/>
            <person name="Holroyd S."/>
            <person name="Jagels K."/>
            <person name="James K.D."/>
            <person name="Lennard N."/>
            <person name="Line A."/>
            <person name="Mayes R."/>
            <person name="Moule S."/>
            <person name="Mungall K."/>
            <person name="Ormond D."/>
            <person name="Quail M.A."/>
            <person name="Rabbinowitsch E."/>
            <person name="Rutherford K.M."/>
            <person name="Sanders M."/>
            <person name="Sharp S."/>
            <person name="Simmonds M."/>
            <person name="Stevens K."/>
            <person name="Whitehead S."/>
            <person name="Barrell B.G."/>
            <person name="Spratt B.G."/>
            <person name="Parkhill J."/>
        </authorList>
    </citation>
    <scope>NUCLEOTIDE SEQUENCE [LARGE SCALE GENOMIC DNA]</scope>
    <source>
        <strain>MRSA252</strain>
    </source>
</reference>
<sequence length="78" mass="9063">MEFREQVLNLLAEVAENDIVKENPDVEIFEEGIIDSFQTVGLLLEIQNKLDIEVSIMDFDRDEWATPNKIVEALEELR</sequence>
<protein>
    <recommendedName>
        <fullName evidence="1">D-alanyl carrier protein</fullName>
        <shortName evidence="1">DCP</shortName>
    </recommendedName>
    <alternativeName>
        <fullName evidence="1">D-alanine--poly(phosphoribitol) ligase subunit 2</fullName>
    </alternativeName>
</protein>
<dbReference type="EMBL" id="BX571856">
    <property type="protein sequence ID" value="CAG39902.1"/>
    <property type="molecule type" value="Genomic_DNA"/>
</dbReference>
<dbReference type="RefSeq" id="WP_000395692.1">
    <property type="nucleotide sequence ID" value="NC_002952.2"/>
</dbReference>
<dbReference type="SMR" id="Q6GIF4"/>
<dbReference type="GeneID" id="98345253"/>
<dbReference type="KEGG" id="sar:SAR0896"/>
<dbReference type="HOGENOM" id="CLU_108696_19_0_9"/>
<dbReference type="UniPathway" id="UPA00556"/>
<dbReference type="Proteomes" id="UP000000596">
    <property type="component" value="Chromosome"/>
</dbReference>
<dbReference type="GO" id="GO:0005737">
    <property type="term" value="C:cytoplasm"/>
    <property type="evidence" value="ECO:0007669"/>
    <property type="project" value="UniProtKB-SubCell"/>
</dbReference>
<dbReference type="GO" id="GO:0036370">
    <property type="term" value="F:D-alanyl carrier activity"/>
    <property type="evidence" value="ECO:0007669"/>
    <property type="project" value="UniProtKB-UniRule"/>
</dbReference>
<dbReference type="GO" id="GO:0071555">
    <property type="term" value="P:cell wall organization"/>
    <property type="evidence" value="ECO:0007669"/>
    <property type="project" value="UniProtKB-KW"/>
</dbReference>
<dbReference type="GO" id="GO:0070395">
    <property type="term" value="P:lipoteichoic acid biosynthetic process"/>
    <property type="evidence" value="ECO:0007669"/>
    <property type="project" value="UniProtKB-UniRule"/>
</dbReference>
<dbReference type="Gene3D" id="1.10.1200.10">
    <property type="entry name" value="ACP-like"/>
    <property type="match status" value="1"/>
</dbReference>
<dbReference type="HAMAP" id="MF_00565">
    <property type="entry name" value="DltC"/>
    <property type="match status" value="1"/>
</dbReference>
<dbReference type="InterPro" id="IPR036736">
    <property type="entry name" value="ACP-like_sf"/>
</dbReference>
<dbReference type="InterPro" id="IPR003230">
    <property type="entry name" value="DltC"/>
</dbReference>
<dbReference type="InterPro" id="IPR009081">
    <property type="entry name" value="PP-bd_ACP"/>
</dbReference>
<dbReference type="NCBIfam" id="TIGR01688">
    <property type="entry name" value="dltC"/>
    <property type="match status" value="1"/>
</dbReference>
<dbReference type="NCBIfam" id="NF003464">
    <property type="entry name" value="PRK05087.1"/>
    <property type="match status" value="1"/>
</dbReference>
<dbReference type="Pfam" id="PF00550">
    <property type="entry name" value="PP-binding"/>
    <property type="match status" value="1"/>
</dbReference>
<dbReference type="SUPFAM" id="SSF47336">
    <property type="entry name" value="ACP-like"/>
    <property type="match status" value="1"/>
</dbReference>
<dbReference type="PROSITE" id="PS50075">
    <property type="entry name" value="CARRIER"/>
    <property type="match status" value="1"/>
</dbReference>
<accession>Q6GIF4</accession>
<gene>
    <name evidence="1" type="primary">dltC</name>
    <name type="ordered locus">SAR0896</name>
</gene>
<evidence type="ECO:0000255" key="1">
    <source>
        <dbReference type="HAMAP-Rule" id="MF_00565"/>
    </source>
</evidence>
<comment type="function">
    <text evidence="1">Carrier protein involved in the D-alanylation of lipoteichoic acid (LTA). The loading of thioester-linked D-alanine onto DltC is catalyzed by D-alanine--D-alanyl carrier protein ligase DltA. The DltC-carried D-alanyl group is further transferred to cell membrane phosphatidylglycerol (PG) by forming an ester bond, probably catalyzed by DltD. D-alanylation of LTA plays an important role in modulating the properties of the cell wall in Gram-positive bacteria, influencing the net charge of the cell wall.</text>
</comment>
<comment type="pathway">
    <text evidence="1">Cell wall biogenesis; lipoteichoic acid biosynthesis.</text>
</comment>
<comment type="subcellular location">
    <subcellularLocation>
        <location evidence="1">Cytoplasm</location>
    </subcellularLocation>
</comment>
<comment type="PTM">
    <text evidence="1">4'-phosphopantetheine is transferred from CoA to a specific serine of apo-DCP.</text>
</comment>
<comment type="similarity">
    <text evidence="1">Belongs to the DltC family.</text>
</comment>